<feature type="chain" id="PRO_0000189118" description="1-deoxy-D-xylulose-5-phosphate synthase">
    <location>
        <begin position="1"/>
        <end position="629"/>
    </location>
</feature>
<feature type="binding site" evidence="1">
    <location>
        <position position="85"/>
    </location>
    <ligand>
        <name>thiamine diphosphate</name>
        <dbReference type="ChEBI" id="CHEBI:58937"/>
    </ligand>
</feature>
<feature type="binding site" evidence="1">
    <location>
        <begin position="126"/>
        <end position="128"/>
    </location>
    <ligand>
        <name>thiamine diphosphate</name>
        <dbReference type="ChEBI" id="CHEBI:58937"/>
    </ligand>
</feature>
<feature type="binding site" evidence="1">
    <location>
        <position position="157"/>
    </location>
    <ligand>
        <name>Mg(2+)</name>
        <dbReference type="ChEBI" id="CHEBI:18420"/>
    </ligand>
</feature>
<feature type="binding site" evidence="1">
    <location>
        <begin position="158"/>
        <end position="159"/>
    </location>
    <ligand>
        <name>thiamine diphosphate</name>
        <dbReference type="ChEBI" id="CHEBI:58937"/>
    </ligand>
</feature>
<feature type="binding site" evidence="1">
    <location>
        <position position="186"/>
    </location>
    <ligand>
        <name>Mg(2+)</name>
        <dbReference type="ChEBI" id="CHEBI:18420"/>
    </ligand>
</feature>
<feature type="binding site" evidence="1">
    <location>
        <position position="186"/>
    </location>
    <ligand>
        <name>thiamine diphosphate</name>
        <dbReference type="ChEBI" id="CHEBI:58937"/>
    </ligand>
</feature>
<feature type="binding site" evidence="1">
    <location>
        <position position="293"/>
    </location>
    <ligand>
        <name>thiamine diphosphate</name>
        <dbReference type="ChEBI" id="CHEBI:58937"/>
    </ligand>
</feature>
<feature type="binding site" evidence="1">
    <location>
        <position position="373"/>
    </location>
    <ligand>
        <name>thiamine diphosphate</name>
        <dbReference type="ChEBI" id="CHEBI:58937"/>
    </ligand>
</feature>
<protein>
    <recommendedName>
        <fullName evidence="1">1-deoxy-D-xylulose-5-phosphate synthase</fullName>
        <ecNumber evidence="1">2.2.1.7</ecNumber>
    </recommendedName>
    <alternativeName>
        <fullName evidence="1">1-deoxyxylulose-5-phosphate synthase</fullName>
        <shortName evidence="1">DXP synthase</shortName>
        <shortName evidence="1">DXPS</shortName>
    </alternativeName>
</protein>
<keyword id="KW-0414">Isoprene biosynthesis</keyword>
<keyword id="KW-0460">Magnesium</keyword>
<keyword id="KW-0479">Metal-binding</keyword>
<keyword id="KW-1185">Reference proteome</keyword>
<keyword id="KW-0784">Thiamine biosynthesis</keyword>
<keyword id="KW-0786">Thiamine pyrophosphate</keyword>
<keyword id="KW-0808">Transferase</keyword>
<comment type="function">
    <text evidence="1">Catalyzes the acyloin condensation reaction between C atoms 2 and 3 of pyruvate and glyceraldehyde 3-phosphate to yield 1-deoxy-D-xylulose-5-phosphate (DXP).</text>
</comment>
<comment type="catalytic activity">
    <reaction evidence="1">
        <text>D-glyceraldehyde 3-phosphate + pyruvate + H(+) = 1-deoxy-D-xylulose 5-phosphate + CO2</text>
        <dbReference type="Rhea" id="RHEA:12605"/>
        <dbReference type="ChEBI" id="CHEBI:15361"/>
        <dbReference type="ChEBI" id="CHEBI:15378"/>
        <dbReference type="ChEBI" id="CHEBI:16526"/>
        <dbReference type="ChEBI" id="CHEBI:57792"/>
        <dbReference type="ChEBI" id="CHEBI:59776"/>
        <dbReference type="EC" id="2.2.1.7"/>
    </reaction>
</comment>
<comment type="cofactor">
    <cofactor evidence="1">
        <name>Mg(2+)</name>
        <dbReference type="ChEBI" id="CHEBI:18420"/>
    </cofactor>
    <text evidence="1">Binds 1 Mg(2+) ion per subunit.</text>
</comment>
<comment type="cofactor">
    <cofactor evidence="1">
        <name>thiamine diphosphate</name>
        <dbReference type="ChEBI" id="CHEBI:58937"/>
    </cofactor>
    <text evidence="1">Binds 1 thiamine pyrophosphate per subunit.</text>
</comment>
<comment type="pathway">
    <text evidence="1">Metabolic intermediate biosynthesis; 1-deoxy-D-xylulose 5-phosphate biosynthesis; 1-deoxy-D-xylulose 5-phosphate from D-glyceraldehyde 3-phosphate and pyruvate: step 1/1.</text>
</comment>
<comment type="subunit">
    <text evidence="1">Homodimer.</text>
</comment>
<comment type="similarity">
    <text evidence="1">Belongs to the transketolase family. DXPS subfamily.</text>
</comment>
<proteinExistence type="inferred from homology"/>
<evidence type="ECO:0000255" key="1">
    <source>
        <dbReference type="HAMAP-Rule" id="MF_00315"/>
    </source>
</evidence>
<sequence length="629" mass="69412">MEVKTLDVANFLARIQKQESTFESLSKFSPTQLKELATCIRHRILEVVSSNGGHLSSTLGAVDLIIGMHLVFDANTNPFIFDVSHQAYAHKLLTGRWNDFSSLRQFGGLSGFCNPKESPSDYFIAGHSSTSISLAVGAAKALALKGSASMPVVMIGDGSMSAGLVYEALNELGDKKYPMVIILNDNKMSISKPIGAISNYLSQILTTSIYQKIRDTIKKVLTKMPDSATYLAKRFEESLKLITPGILFEELGLDYVGPIDGHNIELIIATLQRAKEMRKPVIIHAQTLKGKGYEIAEGRFEHWHGVGPFDVSTGSSLKSSAPQSPTAVFSESLESYLTDEKVVGVTAAMPSGTGLDKLIEKYPQRFWDVAICEAHAVTSMAAIAKEGFKPFVAIYSTFLQRAYDQIIHDVGILGLPVRFCIDRAGIVGEDGETHQGLFDIAYLRSIPHMVLFAPRDNASLQQAVAFAYRYNDSPCAFRYPRGSFTLEEGVFVSNEFVLGQAEMLKRGKKILLVGYGNGVGRAYKVYQALITEGYEPSLLDLRFVKPLDKHMLNEVFKTHTHICVFSDSYYMGGVASALLEFMAEENIKDVQLKSFEIKDRFVPHGNTALIEQSLGLDTPHLVSKIKEWI</sequence>
<name>DXS_HELHP</name>
<reference key="1">
    <citation type="journal article" date="2003" name="Proc. Natl. Acad. Sci. U.S.A.">
        <title>The complete genome sequence of the carcinogenic bacterium Helicobacter hepaticus.</title>
        <authorList>
            <person name="Suerbaum S."/>
            <person name="Josenhans C."/>
            <person name="Sterzenbach T."/>
            <person name="Drescher B."/>
            <person name="Brandt P."/>
            <person name="Bell M."/>
            <person name="Droege M."/>
            <person name="Fartmann B."/>
            <person name="Fischer H.-P."/>
            <person name="Ge Z."/>
            <person name="Hoerster A."/>
            <person name="Holland R."/>
            <person name="Klein K."/>
            <person name="Koenig J."/>
            <person name="Macko L."/>
            <person name="Mendz G.L."/>
            <person name="Nyakatura G."/>
            <person name="Schauer D.B."/>
            <person name="Shen Z."/>
            <person name="Weber J."/>
            <person name="Frosch M."/>
            <person name="Fox J.G."/>
        </authorList>
    </citation>
    <scope>NUCLEOTIDE SEQUENCE [LARGE SCALE GENOMIC DNA]</scope>
    <source>
        <strain>ATCC 51449 / 3B1</strain>
    </source>
</reference>
<gene>
    <name evidence="1" type="primary">dxs</name>
    <name type="ordered locus">HH_0608</name>
</gene>
<dbReference type="EC" id="2.2.1.7" evidence="1"/>
<dbReference type="EMBL" id="AE017125">
    <property type="protein sequence ID" value="AAP77205.1"/>
    <property type="molecule type" value="Genomic_DNA"/>
</dbReference>
<dbReference type="RefSeq" id="WP_011115450.1">
    <property type="nucleotide sequence ID" value="NC_004917.1"/>
</dbReference>
<dbReference type="SMR" id="Q7VIJ7"/>
<dbReference type="STRING" id="235279.HH_0608"/>
<dbReference type="KEGG" id="hhe:HH_0608"/>
<dbReference type="eggNOG" id="COG1154">
    <property type="taxonomic scope" value="Bacteria"/>
</dbReference>
<dbReference type="HOGENOM" id="CLU_009227_1_4_7"/>
<dbReference type="OrthoDB" id="9803371at2"/>
<dbReference type="UniPathway" id="UPA00064">
    <property type="reaction ID" value="UER00091"/>
</dbReference>
<dbReference type="Proteomes" id="UP000002495">
    <property type="component" value="Chromosome"/>
</dbReference>
<dbReference type="GO" id="GO:0005829">
    <property type="term" value="C:cytosol"/>
    <property type="evidence" value="ECO:0007669"/>
    <property type="project" value="TreeGrafter"/>
</dbReference>
<dbReference type="GO" id="GO:0008661">
    <property type="term" value="F:1-deoxy-D-xylulose-5-phosphate synthase activity"/>
    <property type="evidence" value="ECO:0007669"/>
    <property type="project" value="UniProtKB-UniRule"/>
</dbReference>
<dbReference type="GO" id="GO:0000287">
    <property type="term" value="F:magnesium ion binding"/>
    <property type="evidence" value="ECO:0007669"/>
    <property type="project" value="UniProtKB-UniRule"/>
</dbReference>
<dbReference type="GO" id="GO:0030976">
    <property type="term" value="F:thiamine pyrophosphate binding"/>
    <property type="evidence" value="ECO:0007669"/>
    <property type="project" value="UniProtKB-UniRule"/>
</dbReference>
<dbReference type="GO" id="GO:0052865">
    <property type="term" value="P:1-deoxy-D-xylulose 5-phosphate biosynthetic process"/>
    <property type="evidence" value="ECO:0007669"/>
    <property type="project" value="UniProtKB-UniPathway"/>
</dbReference>
<dbReference type="GO" id="GO:0019288">
    <property type="term" value="P:isopentenyl diphosphate biosynthetic process, methylerythritol 4-phosphate pathway"/>
    <property type="evidence" value="ECO:0007669"/>
    <property type="project" value="TreeGrafter"/>
</dbReference>
<dbReference type="GO" id="GO:0016114">
    <property type="term" value="P:terpenoid biosynthetic process"/>
    <property type="evidence" value="ECO:0007669"/>
    <property type="project" value="UniProtKB-UniRule"/>
</dbReference>
<dbReference type="GO" id="GO:0009228">
    <property type="term" value="P:thiamine biosynthetic process"/>
    <property type="evidence" value="ECO:0007669"/>
    <property type="project" value="UniProtKB-UniRule"/>
</dbReference>
<dbReference type="CDD" id="cd02007">
    <property type="entry name" value="TPP_DXS"/>
    <property type="match status" value="1"/>
</dbReference>
<dbReference type="CDD" id="cd07033">
    <property type="entry name" value="TPP_PYR_DXS_TK_like"/>
    <property type="match status" value="1"/>
</dbReference>
<dbReference type="Gene3D" id="3.40.50.920">
    <property type="match status" value="1"/>
</dbReference>
<dbReference type="Gene3D" id="3.40.50.970">
    <property type="match status" value="2"/>
</dbReference>
<dbReference type="HAMAP" id="MF_00315">
    <property type="entry name" value="DXP_synth"/>
    <property type="match status" value="1"/>
</dbReference>
<dbReference type="InterPro" id="IPR005477">
    <property type="entry name" value="Dxylulose-5-P_synthase"/>
</dbReference>
<dbReference type="InterPro" id="IPR029061">
    <property type="entry name" value="THDP-binding"/>
</dbReference>
<dbReference type="InterPro" id="IPR009014">
    <property type="entry name" value="Transketo_C/PFOR_II"/>
</dbReference>
<dbReference type="InterPro" id="IPR005475">
    <property type="entry name" value="Transketolase-like_Pyr-bd"/>
</dbReference>
<dbReference type="InterPro" id="IPR020826">
    <property type="entry name" value="Transketolase_BS"/>
</dbReference>
<dbReference type="InterPro" id="IPR033248">
    <property type="entry name" value="Transketolase_C"/>
</dbReference>
<dbReference type="InterPro" id="IPR049557">
    <property type="entry name" value="Transketolase_CS"/>
</dbReference>
<dbReference type="NCBIfam" id="TIGR00204">
    <property type="entry name" value="dxs"/>
    <property type="match status" value="1"/>
</dbReference>
<dbReference type="NCBIfam" id="NF003933">
    <property type="entry name" value="PRK05444.2-2"/>
    <property type="match status" value="1"/>
</dbReference>
<dbReference type="PANTHER" id="PTHR43322">
    <property type="entry name" value="1-D-DEOXYXYLULOSE 5-PHOSPHATE SYNTHASE-RELATED"/>
    <property type="match status" value="1"/>
</dbReference>
<dbReference type="PANTHER" id="PTHR43322:SF5">
    <property type="entry name" value="1-DEOXY-D-XYLULOSE-5-PHOSPHATE SYNTHASE, CHLOROPLASTIC"/>
    <property type="match status" value="1"/>
</dbReference>
<dbReference type="Pfam" id="PF13292">
    <property type="entry name" value="DXP_synthase_N"/>
    <property type="match status" value="1"/>
</dbReference>
<dbReference type="Pfam" id="PF02779">
    <property type="entry name" value="Transket_pyr"/>
    <property type="match status" value="1"/>
</dbReference>
<dbReference type="Pfam" id="PF02780">
    <property type="entry name" value="Transketolase_C"/>
    <property type="match status" value="1"/>
</dbReference>
<dbReference type="SMART" id="SM00861">
    <property type="entry name" value="Transket_pyr"/>
    <property type="match status" value="1"/>
</dbReference>
<dbReference type="SUPFAM" id="SSF52518">
    <property type="entry name" value="Thiamin diphosphate-binding fold (THDP-binding)"/>
    <property type="match status" value="2"/>
</dbReference>
<dbReference type="SUPFAM" id="SSF52922">
    <property type="entry name" value="TK C-terminal domain-like"/>
    <property type="match status" value="1"/>
</dbReference>
<dbReference type="PROSITE" id="PS00801">
    <property type="entry name" value="TRANSKETOLASE_1"/>
    <property type="match status" value="1"/>
</dbReference>
<dbReference type="PROSITE" id="PS00802">
    <property type="entry name" value="TRANSKETOLASE_2"/>
    <property type="match status" value="1"/>
</dbReference>
<organism>
    <name type="scientific">Helicobacter hepaticus (strain ATCC 51449 / 3B1)</name>
    <dbReference type="NCBI Taxonomy" id="235279"/>
    <lineage>
        <taxon>Bacteria</taxon>
        <taxon>Pseudomonadati</taxon>
        <taxon>Campylobacterota</taxon>
        <taxon>Epsilonproteobacteria</taxon>
        <taxon>Campylobacterales</taxon>
        <taxon>Helicobacteraceae</taxon>
        <taxon>Helicobacter</taxon>
    </lineage>
</organism>
<accession>Q7VIJ7</accession>